<sequence length="285" mass="31490">MLYLVGLGLADETDITVKGLEVVKRAERVYLEAYTSILLVSKEKLEAFYGRPVIEADRELVETGSDEILAGADKADVAFLVVGDPFGATTHTDLVLRAREMGIESKVIPNASIMSGIGCTGLQLYNFGQTVSMVFFTENWKPTSYYDRVKENVQLGLHTLVLLDIKVKEQSYENMARGRRIFEPPRYMTVAQCASQMLETEEERKEGVFGPDSLAVGAARVGGPDQKLVVGTLKELSEVDMGPPLHSLVLLGRKAHDLERLYIREFAVDKATFDASWNKGYGATS</sequence>
<dbReference type="EC" id="2.1.1.314"/>
<dbReference type="EMBL" id="BX649607">
    <property type="protein sequence ID" value="CAF32112.1"/>
    <property type="molecule type" value="Genomic_DNA"/>
</dbReference>
<dbReference type="EMBL" id="AAHF01000004">
    <property type="protein sequence ID" value="EAL90734.1"/>
    <property type="molecule type" value="Genomic_DNA"/>
</dbReference>
<dbReference type="RefSeq" id="XP_752772.1">
    <property type="nucleotide sequence ID" value="XM_747679.1"/>
</dbReference>
<dbReference type="SMR" id="Q6MY91"/>
<dbReference type="FunCoup" id="Q6MY91">
    <property type="interactions" value="935"/>
</dbReference>
<dbReference type="STRING" id="330879.Q6MY91"/>
<dbReference type="EnsemblFungi" id="EAL90734">
    <property type="protein sequence ID" value="EAL90734"/>
    <property type="gene ID" value="AFUA_1G14020"/>
</dbReference>
<dbReference type="GeneID" id="3509777"/>
<dbReference type="KEGG" id="afm:AFUA_1G14020"/>
<dbReference type="VEuPathDB" id="FungiDB:Afu1g14020"/>
<dbReference type="eggNOG" id="KOG3123">
    <property type="taxonomic scope" value="Eukaryota"/>
</dbReference>
<dbReference type="HOGENOM" id="CLU_066040_1_0_1"/>
<dbReference type="InParanoid" id="Q6MY91"/>
<dbReference type="OMA" id="HNASIMS"/>
<dbReference type="OrthoDB" id="2516at2759"/>
<dbReference type="UniPathway" id="UPA00559"/>
<dbReference type="Proteomes" id="UP000002530">
    <property type="component" value="Chromosome 1"/>
</dbReference>
<dbReference type="GO" id="GO:0005737">
    <property type="term" value="C:cytoplasm"/>
    <property type="evidence" value="ECO:0007669"/>
    <property type="project" value="UniProtKB-SubCell"/>
</dbReference>
<dbReference type="GO" id="GO:0141133">
    <property type="term" value="F:diphthine methyl ester synthase activity"/>
    <property type="evidence" value="ECO:0007669"/>
    <property type="project" value="UniProtKB-EC"/>
</dbReference>
<dbReference type="GO" id="GO:0032259">
    <property type="term" value="P:methylation"/>
    <property type="evidence" value="ECO:0007669"/>
    <property type="project" value="UniProtKB-KW"/>
</dbReference>
<dbReference type="GO" id="GO:0017183">
    <property type="term" value="P:protein histidyl modification to diphthamide"/>
    <property type="evidence" value="ECO:0000250"/>
    <property type="project" value="UniProtKB"/>
</dbReference>
<dbReference type="CDD" id="cd11647">
    <property type="entry name" value="DHP5_DphB"/>
    <property type="match status" value="1"/>
</dbReference>
<dbReference type="FunFam" id="3.30.950.10:FF:000004">
    <property type="entry name" value="Diphthine synthase putative"/>
    <property type="match status" value="1"/>
</dbReference>
<dbReference type="FunFam" id="3.40.1010.10:FF:000004">
    <property type="entry name" value="Putative diphthine synthase"/>
    <property type="match status" value="1"/>
</dbReference>
<dbReference type="Gene3D" id="3.40.1010.10">
    <property type="entry name" value="Cobalt-precorrin-4 Transmethylase, Domain 1"/>
    <property type="match status" value="1"/>
</dbReference>
<dbReference type="Gene3D" id="3.30.950.10">
    <property type="entry name" value="Methyltransferase, Cobalt-precorrin-4 Transmethylase, Domain 2"/>
    <property type="match status" value="1"/>
</dbReference>
<dbReference type="HAMAP" id="MF_01084">
    <property type="entry name" value="Diphthine_synth"/>
    <property type="match status" value="1"/>
</dbReference>
<dbReference type="InterPro" id="IPR000878">
    <property type="entry name" value="4pyrrol_Mease"/>
</dbReference>
<dbReference type="InterPro" id="IPR035996">
    <property type="entry name" value="4pyrrol_Methylase_sf"/>
</dbReference>
<dbReference type="InterPro" id="IPR014777">
    <property type="entry name" value="4pyrrole_Mease_sub1"/>
</dbReference>
<dbReference type="InterPro" id="IPR014776">
    <property type="entry name" value="4pyrrole_Mease_sub2"/>
</dbReference>
<dbReference type="InterPro" id="IPR004551">
    <property type="entry name" value="Dphthn_synthase"/>
</dbReference>
<dbReference type="NCBIfam" id="TIGR00522">
    <property type="entry name" value="dph5"/>
    <property type="match status" value="1"/>
</dbReference>
<dbReference type="PANTHER" id="PTHR10882:SF0">
    <property type="entry name" value="DIPHTHINE METHYL ESTER SYNTHASE"/>
    <property type="match status" value="1"/>
</dbReference>
<dbReference type="PANTHER" id="PTHR10882">
    <property type="entry name" value="DIPHTHINE SYNTHASE"/>
    <property type="match status" value="1"/>
</dbReference>
<dbReference type="Pfam" id="PF00590">
    <property type="entry name" value="TP_methylase"/>
    <property type="match status" value="1"/>
</dbReference>
<dbReference type="PIRSF" id="PIRSF036432">
    <property type="entry name" value="Diphthine_synth"/>
    <property type="match status" value="1"/>
</dbReference>
<dbReference type="SUPFAM" id="SSF53790">
    <property type="entry name" value="Tetrapyrrole methylase"/>
    <property type="match status" value="1"/>
</dbReference>
<reference key="1">
    <citation type="journal article" date="2004" name="Fungal Genet. Biol.">
        <title>Insight into the genome of Aspergillus fumigatus: analysis of a 922 kb region encompassing the nitrate assimilation gene cluster.</title>
        <authorList>
            <person name="Pain A."/>
            <person name="Woodward J.R."/>
            <person name="Quail M.A."/>
            <person name="Anderson M.J."/>
            <person name="Clark R."/>
            <person name="Collins M."/>
            <person name="Fosker N."/>
            <person name="Fraser A."/>
            <person name="Harris D.E."/>
            <person name="Larke N."/>
            <person name="Murphy L.D."/>
            <person name="Humphray S."/>
            <person name="O'Neil S."/>
            <person name="Pertea M."/>
            <person name="Price C."/>
            <person name="Rabbinowitsch E."/>
            <person name="Rajandream M.A."/>
            <person name="Salzberg S.L."/>
            <person name="Saunders D."/>
            <person name="Seeger K."/>
            <person name="Sharp S."/>
            <person name="Warren T."/>
            <person name="Denning D.W."/>
            <person name="Barrell B.G."/>
            <person name="Hall N."/>
        </authorList>
    </citation>
    <scope>NUCLEOTIDE SEQUENCE [LARGE SCALE GENOMIC DNA]</scope>
    <source>
        <strain>ATCC MYA-4609 / CBS 101355 / FGSC A1100 / Af293</strain>
    </source>
</reference>
<reference key="2">
    <citation type="journal article" date="2005" name="Nature">
        <title>Genomic sequence of the pathogenic and allergenic filamentous fungus Aspergillus fumigatus.</title>
        <authorList>
            <person name="Nierman W.C."/>
            <person name="Pain A."/>
            <person name="Anderson M.J."/>
            <person name="Wortman J.R."/>
            <person name="Kim H.S."/>
            <person name="Arroyo J."/>
            <person name="Berriman M."/>
            <person name="Abe K."/>
            <person name="Archer D.B."/>
            <person name="Bermejo C."/>
            <person name="Bennett J.W."/>
            <person name="Bowyer P."/>
            <person name="Chen D."/>
            <person name="Collins M."/>
            <person name="Coulsen R."/>
            <person name="Davies R."/>
            <person name="Dyer P.S."/>
            <person name="Farman M.L."/>
            <person name="Fedorova N."/>
            <person name="Fedorova N.D."/>
            <person name="Feldblyum T.V."/>
            <person name="Fischer R."/>
            <person name="Fosker N."/>
            <person name="Fraser A."/>
            <person name="Garcia J.L."/>
            <person name="Garcia M.J."/>
            <person name="Goble A."/>
            <person name="Goldman G.H."/>
            <person name="Gomi K."/>
            <person name="Griffith-Jones S."/>
            <person name="Gwilliam R."/>
            <person name="Haas B.J."/>
            <person name="Haas H."/>
            <person name="Harris D.E."/>
            <person name="Horiuchi H."/>
            <person name="Huang J."/>
            <person name="Humphray S."/>
            <person name="Jimenez J."/>
            <person name="Keller N."/>
            <person name="Khouri H."/>
            <person name="Kitamoto K."/>
            <person name="Kobayashi T."/>
            <person name="Konzack S."/>
            <person name="Kulkarni R."/>
            <person name="Kumagai T."/>
            <person name="Lafton A."/>
            <person name="Latge J.-P."/>
            <person name="Li W."/>
            <person name="Lord A."/>
            <person name="Lu C."/>
            <person name="Majoros W.H."/>
            <person name="May G.S."/>
            <person name="Miller B.L."/>
            <person name="Mohamoud Y."/>
            <person name="Molina M."/>
            <person name="Monod M."/>
            <person name="Mouyna I."/>
            <person name="Mulligan S."/>
            <person name="Murphy L.D."/>
            <person name="O'Neil S."/>
            <person name="Paulsen I."/>
            <person name="Penalva M.A."/>
            <person name="Pertea M."/>
            <person name="Price C."/>
            <person name="Pritchard B.L."/>
            <person name="Quail M.A."/>
            <person name="Rabbinowitsch E."/>
            <person name="Rawlins N."/>
            <person name="Rajandream M.A."/>
            <person name="Reichard U."/>
            <person name="Renauld H."/>
            <person name="Robson G.D."/>
            <person name="Rodriguez de Cordoba S."/>
            <person name="Rodriguez-Pena J.M."/>
            <person name="Ronning C.M."/>
            <person name="Rutter S."/>
            <person name="Salzberg S.L."/>
            <person name="Sanchez M."/>
            <person name="Sanchez-Ferrero J.C."/>
            <person name="Saunders D."/>
            <person name="Seeger K."/>
            <person name="Squares R."/>
            <person name="Squares S."/>
            <person name="Takeuchi M."/>
            <person name="Tekaia F."/>
            <person name="Turner G."/>
            <person name="Vazquez de Aldana C.R."/>
            <person name="Weidman J."/>
            <person name="White O."/>
            <person name="Woodward J.R."/>
            <person name="Yu J.-H."/>
            <person name="Fraser C.M."/>
            <person name="Galagan J.E."/>
            <person name="Asai K."/>
            <person name="Machida M."/>
            <person name="Hall N."/>
            <person name="Barrell B.G."/>
            <person name="Denning D.W."/>
        </authorList>
    </citation>
    <scope>NUCLEOTIDE SEQUENCE [LARGE SCALE GENOMIC DNA]</scope>
    <source>
        <strain>ATCC MYA-4609 / CBS 101355 / FGSC A1100 / Af293</strain>
    </source>
</reference>
<comment type="function">
    <text evidence="2">S-adenosyl-L-methionine-dependent methyltransferase that catalyzes four methylations of the modified target histidine residue in translation elongation factor 2 (EF-2), to form an intermediate called diphthine methyl ester. The four successive methylation reactions represent the second step of diphthamide biosynthesis.</text>
</comment>
<comment type="catalytic activity">
    <reaction evidence="2">
        <text>2-[(3S)-amino-3-carboxypropyl]-L-histidyl-[translation elongation factor 2] + 4 S-adenosyl-L-methionine = diphthine methyl ester-[translation elongation factor 2] + 4 S-adenosyl-L-homocysteine + 3 H(+)</text>
        <dbReference type="Rhea" id="RHEA:42652"/>
        <dbReference type="Rhea" id="RHEA-COMP:9749"/>
        <dbReference type="Rhea" id="RHEA-COMP:10173"/>
        <dbReference type="ChEBI" id="CHEBI:15378"/>
        <dbReference type="ChEBI" id="CHEBI:57856"/>
        <dbReference type="ChEBI" id="CHEBI:59789"/>
        <dbReference type="ChEBI" id="CHEBI:73995"/>
        <dbReference type="ChEBI" id="CHEBI:79005"/>
        <dbReference type="EC" id="2.1.1.314"/>
    </reaction>
</comment>
<comment type="pathway">
    <text>Protein modification; peptidyl-diphthamide biosynthesis.</text>
</comment>
<comment type="subcellular location">
    <subcellularLocation>
        <location evidence="1">Cytoplasm</location>
    </subcellularLocation>
</comment>
<comment type="similarity">
    <text evidence="3">Belongs to the diphthine synthase family.</text>
</comment>
<accession>Q6MY91</accession>
<accession>Q4WS48</accession>
<protein>
    <recommendedName>
        <fullName>Diphthine methyl ester synthase</fullName>
        <ecNumber>2.1.1.314</ecNumber>
    </recommendedName>
    <alternativeName>
        <fullName>Diphthamide biosynthesis methyltransferase</fullName>
    </alternativeName>
</protein>
<gene>
    <name type="primary">dph5</name>
    <name type="ORF">AfA31E11.010c</name>
    <name type="ORF">AFUA_1G14020</name>
</gene>
<organism>
    <name type="scientific">Aspergillus fumigatus (strain ATCC MYA-4609 / CBS 101355 / FGSC A1100 / Af293)</name>
    <name type="common">Neosartorya fumigata</name>
    <dbReference type="NCBI Taxonomy" id="330879"/>
    <lineage>
        <taxon>Eukaryota</taxon>
        <taxon>Fungi</taxon>
        <taxon>Dikarya</taxon>
        <taxon>Ascomycota</taxon>
        <taxon>Pezizomycotina</taxon>
        <taxon>Eurotiomycetes</taxon>
        <taxon>Eurotiomycetidae</taxon>
        <taxon>Eurotiales</taxon>
        <taxon>Aspergillaceae</taxon>
        <taxon>Aspergillus</taxon>
        <taxon>Aspergillus subgen. Fumigati</taxon>
    </lineage>
</organism>
<feature type="chain" id="PRO_0000156137" description="Diphthine methyl ester synthase">
    <location>
        <begin position="1"/>
        <end position="285"/>
    </location>
</feature>
<feature type="binding site" evidence="1">
    <location>
        <position position="9"/>
    </location>
    <ligand>
        <name>S-adenosyl-L-methionine</name>
        <dbReference type="ChEBI" id="CHEBI:59789"/>
    </ligand>
</feature>
<feature type="binding site" evidence="1">
    <location>
        <position position="84"/>
    </location>
    <ligand>
        <name>S-adenosyl-L-methionine</name>
        <dbReference type="ChEBI" id="CHEBI:59789"/>
    </ligand>
</feature>
<feature type="binding site" evidence="1">
    <location>
        <position position="87"/>
    </location>
    <ligand>
        <name>S-adenosyl-L-methionine</name>
        <dbReference type="ChEBI" id="CHEBI:59789"/>
    </ligand>
</feature>
<feature type="binding site" evidence="1">
    <location>
        <begin position="112"/>
        <end position="113"/>
    </location>
    <ligand>
        <name>S-adenosyl-L-methionine</name>
        <dbReference type="ChEBI" id="CHEBI:59789"/>
    </ligand>
</feature>
<feature type="binding site" evidence="1">
    <location>
        <position position="163"/>
    </location>
    <ligand>
        <name>S-adenosyl-L-methionine</name>
        <dbReference type="ChEBI" id="CHEBI:59789"/>
    </ligand>
</feature>
<feature type="binding site" evidence="1">
    <location>
        <position position="221"/>
    </location>
    <ligand>
        <name>S-adenosyl-L-methionine</name>
        <dbReference type="ChEBI" id="CHEBI:59789"/>
    </ligand>
</feature>
<feature type="binding site" evidence="1">
    <location>
        <position position="246"/>
    </location>
    <ligand>
        <name>S-adenosyl-L-methionine</name>
        <dbReference type="ChEBI" id="CHEBI:59789"/>
    </ligand>
</feature>
<proteinExistence type="inferred from homology"/>
<keyword id="KW-0963">Cytoplasm</keyword>
<keyword id="KW-0489">Methyltransferase</keyword>
<keyword id="KW-1185">Reference proteome</keyword>
<keyword id="KW-0949">S-adenosyl-L-methionine</keyword>
<keyword id="KW-0808">Transferase</keyword>
<evidence type="ECO:0000250" key="1"/>
<evidence type="ECO:0000250" key="2">
    <source>
        <dbReference type="UniProtKB" id="P32469"/>
    </source>
</evidence>
<evidence type="ECO:0000305" key="3"/>
<name>DPH5_ASPFU</name>